<sequence length="320" mass="34843">MSTITAADVNKLRQSTGAGMMDCKKALVEAEGDFDKAIQILREKGQKVAANRSDRESSEGAAVSFINADNTKGAIITLNCETDFVGKNEAFVTLAKDLVERAINFSNKEEFLASDFNGITVAEKLIEQTGVIGEKIEIGGFEILEGAFVGSYVHVNKIAALTAISAPIANAETLTKDVSMQVASMGADTLSYKDFDPAFVESELAARIAVIEKDNEEAKRLGKTLKNVPKYISFSQLTPEVIKQAEEDAKAELKAEGKPEQIWDKILPGKVQRFISDNTTLDQEKALLDQNFIKDDSKKVGDYVKGFNVEITGFKRVTLG</sequence>
<accession>A5FJI4</accession>
<comment type="function">
    <text evidence="1">Associates with the EF-Tu.GDP complex and induces the exchange of GDP to GTP. It remains bound to the aminoacyl-tRNA.EF-Tu.GTP complex up to the GTP hydrolysis stage on the ribosome.</text>
</comment>
<comment type="subcellular location">
    <subcellularLocation>
        <location evidence="1">Cytoplasm</location>
    </subcellularLocation>
</comment>
<comment type="similarity">
    <text evidence="1">Belongs to the EF-Ts family.</text>
</comment>
<keyword id="KW-0963">Cytoplasm</keyword>
<keyword id="KW-0251">Elongation factor</keyword>
<keyword id="KW-0648">Protein biosynthesis</keyword>
<proteinExistence type="inferred from homology"/>
<reference key="1">
    <citation type="journal article" date="2009" name="Appl. Environ. Microbiol.">
        <title>Novel features of the polysaccharide-digesting gliding bacterium Flavobacterium johnsoniae as revealed by genome sequence analysis.</title>
        <authorList>
            <person name="McBride M.J."/>
            <person name="Xie G."/>
            <person name="Martens E.C."/>
            <person name="Lapidus A."/>
            <person name="Henrissat B."/>
            <person name="Rhodes R.G."/>
            <person name="Goltsman E."/>
            <person name="Wang W."/>
            <person name="Xu J."/>
            <person name="Hunnicutt D.W."/>
            <person name="Staroscik A.M."/>
            <person name="Hoover T.R."/>
            <person name="Cheng Y.Q."/>
            <person name="Stein J.L."/>
        </authorList>
    </citation>
    <scope>NUCLEOTIDE SEQUENCE [LARGE SCALE GENOMIC DNA]</scope>
    <source>
        <strain>ATCC 17061 / DSM 2064 / JCM 8514 / BCRC 14874 / CCUG 350202 / NBRC 14942 / NCIMB 11054 / UW101</strain>
    </source>
</reference>
<gene>
    <name evidence="1" type="primary">tsf</name>
    <name type="ordered locus">Fjoh_1609</name>
</gene>
<evidence type="ECO:0000255" key="1">
    <source>
        <dbReference type="HAMAP-Rule" id="MF_00050"/>
    </source>
</evidence>
<protein>
    <recommendedName>
        <fullName evidence="1">Elongation factor Ts</fullName>
        <shortName evidence="1">EF-Ts</shortName>
    </recommendedName>
</protein>
<organism>
    <name type="scientific">Flavobacterium johnsoniae (strain ATCC 17061 / DSM 2064 / JCM 8514 / BCRC 14874 / CCUG 350202 / NBRC 14942 / NCIMB 11054 / UW101)</name>
    <name type="common">Cytophaga johnsonae</name>
    <dbReference type="NCBI Taxonomy" id="376686"/>
    <lineage>
        <taxon>Bacteria</taxon>
        <taxon>Pseudomonadati</taxon>
        <taxon>Bacteroidota</taxon>
        <taxon>Flavobacteriia</taxon>
        <taxon>Flavobacteriales</taxon>
        <taxon>Flavobacteriaceae</taxon>
        <taxon>Flavobacterium</taxon>
    </lineage>
</organism>
<name>EFTS_FLAJ1</name>
<feature type="chain" id="PRO_1000074863" description="Elongation factor Ts">
    <location>
        <begin position="1"/>
        <end position="320"/>
    </location>
</feature>
<feature type="region of interest" description="Involved in Mg(2+) ion dislocation from EF-Tu" evidence="1">
    <location>
        <begin position="82"/>
        <end position="85"/>
    </location>
</feature>
<dbReference type="EMBL" id="CP000685">
    <property type="protein sequence ID" value="ABQ04641.1"/>
    <property type="molecule type" value="Genomic_DNA"/>
</dbReference>
<dbReference type="RefSeq" id="WP_012023685.1">
    <property type="nucleotide sequence ID" value="NZ_MUGZ01000017.1"/>
</dbReference>
<dbReference type="SMR" id="A5FJI4"/>
<dbReference type="STRING" id="376686.Fjoh_1609"/>
<dbReference type="KEGG" id="fjo:Fjoh_1609"/>
<dbReference type="eggNOG" id="COG0264">
    <property type="taxonomic scope" value="Bacteria"/>
</dbReference>
<dbReference type="HOGENOM" id="CLU_047155_0_1_10"/>
<dbReference type="OrthoDB" id="9808348at2"/>
<dbReference type="Proteomes" id="UP000006694">
    <property type="component" value="Chromosome"/>
</dbReference>
<dbReference type="GO" id="GO:0005737">
    <property type="term" value="C:cytoplasm"/>
    <property type="evidence" value="ECO:0007669"/>
    <property type="project" value="UniProtKB-SubCell"/>
</dbReference>
<dbReference type="GO" id="GO:0003746">
    <property type="term" value="F:translation elongation factor activity"/>
    <property type="evidence" value="ECO:0007669"/>
    <property type="project" value="UniProtKB-UniRule"/>
</dbReference>
<dbReference type="CDD" id="cd14275">
    <property type="entry name" value="UBA_EF-Ts"/>
    <property type="match status" value="1"/>
</dbReference>
<dbReference type="FunFam" id="1.10.286.20:FF:000004">
    <property type="entry name" value="Elongation factor Ts"/>
    <property type="match status" value="1"/>
</dbReference>
<dbReference type="FunFam" id="1.10.8.10:FF:000001">
    <property type="entry name" value="Elongation factor Ts"/>
    <property type="match status" value="1"/>
</dbReference>
<dbReference type="Gene3D" id="1.10.286.20">
    <property type="match status" value="1"/>
</dbReference>
<dbReference type="Gene3D" id="1.10.8.10">
    <property type="entry name" value="DNA helicase RuvA subunit, C-terminal domain"/>
    <property type="match status" value="1"/>
</dbReference>
<dbReference type="Gene3D" id="3.30.479.20">
    <property type="entry name" value="Elongation factor Ts, dimerisation domain"/>
    <property type="match status" value="2"/>
</dbReference>
<dbReference type="HAMAP" id="MF_00050">
    <property type="entry name" value="EF_Ts"/>
    <property type="match status" value="1"/>
</dbReference>
<dbReference type="InterPro" id="IPR036402">
    <property type="entry name" value="EF-Ts_dimer_sf"/>
</dbReference>
<dbReference type="InterPro" id="IPR001816">
    <property type="entry name" value="Transl_elong_EFTs/EF1B"/>
</dbReference>
<dbReference type="InterPro" id="IPR014039">
    <property type="entry name" value="Transl_elong_EFTs/EF1B_dimer"/>
</dbReference>
<dbReference type="InterPro" id="IPR018101">
    <property type="entry name" value="Transl_elong_Ts_CS"/>
</dbReference>
<dbReference type="InterPro" id="IPR009060">
    <property type="entry name" value="UBA-like_sf"/>
</dbReference>
<dbReference type="NCBIfam" id="TIGR00116">
    <property type="entry name" value="tsf"/>
    <property type="match status" value="1"/>
</dbReference>
<dbReference type="PANTHER" id="PTHR11741">
    <property type="entry name" value="ELONGATION FACTOR TS"/>
    <property type="match status" value="1"/>
</dbReference>
<dbReference type="PANTHER" id="PTHR11741:SF0">
    <property type="entry name" value="ELONGATION FACTOR TS, MITOCHONDRIAL"/>
    <property type="match status" value="1"/>
</dbReference>
<dbReference type="Pfam" id="PF00889">
    <property type="entry name" value="EF_TS"/>
    <property type="match status" value="2"/>
</dbReference>
<dbReference type="SUPFAM" id="SSF54713">
    <property type="entry name" value="Elongation factor Ts (EF-Ts), dimerisation domain"/>
    <property type="match status" value="2"/>
</dbReference>
<dbReference type="SUPFAM" id="SSF46934">
    <property type="entry name" value="UBA-like"/>
    <property type="match status" value="1"/>
</dbReference>
<dbReference type="PROSITE" id="PS01126">
    <property type="entry name" value="EF_TS_1"/>
    <property type="match status" value="1"/>
</dbReference>